<gene>
    <name type="primary">HDT3</name>
    <name type="synonym">HD2C</name>
    <name type="ordered locus">At5g03740</name>
    <name type="ORF">F17C15_160</name>
    <name type="ORF">MED24.1</name>
</gene>
<keyword id="KW-0002">3D-structure</keyword>
<keyword id="KW-0007">Acetylation</keyword>
<keyword id="KW-0156">Chromatin regulator</keyword>
<keyword id="KW-0217">Developmental protein</keyword>
<keyword id="KW-0378">Hydrolase</keyword>
<keyword id="KW-0479">Metal-binding</keyword>
<keyword id="KW-0539">Nucleus</keyword>
<keyword id="KW-1185">Reference proteome</keyword>
<keyword id="KW-0678">Repressor</keyword>
<keyword id="KW-0804">Transcription</keyword>
<keyword id="KW-0805">Transcription regulation</keyword>
<keyword id="KW-0862">Zinc</keyword>
<keyword id="KW-0863">Zinc-finger</keyword>
<reference key="1">
    <citation type="journal article" date="2001" name="Planta">
        <title>Comparative analysis of HD2 type histone deacetylases in higher plants.</title>
        <authorList>
            <person name="Dangl M."/>
            <person name="Brosch G."/>
            <person name="Haas H."/>
            <person name="Loidl P."/>
            <person name="Lusser A."/>
        </authorList>
    </citation>
    <scope>NUCLEOTIDE SEQUENCE [MRNA]</scope>
    <scope>GENE FAMILY</scope>
    <scope>NOMENCLATURE</scope>
    <source>
        <strain>cv. Columbia</strain>
    </source>
</reference>
<reference key="2">
    <citation type="journal article" date="2002" name="Nucleic Acids Res.">
        <title>Analysis of histone acetyltransferase and histone deacetylase families of Arabidopsis thaliana suggests functional diversification of chromatin modification among multicellular eukaryotes.</title>
        <authorList>
            <person name="Pandey R."/>
            <person name="Mueller A."/>
            <person name="Napoli C.A."/>
            <person name="Selinger D.A."/>
            <person name="Pikaard C.S."/>
            <person name="Richards E.J."/>
            <person name="Bender J."/>
            <person name="Mount D.W."/>
            <person name="Jorgensen R.A."/>
        </authorList>
    </citation>
    <scope>NUCLEOTIDE SEQUENCE [MRNA]</scope>
    <scope>GENE FAMILY</scope>
    <scope>NOMENCLATURE</scope>
    <source>
        <strain>cv. Columbia</strain>
    </source>
</reference>
<reference key="3">
    <citation type="journal article" date="1997" name="DNA Res.">
        <title>Structural analysis of Arabidopsis thaliana chromosome 5. I. Sequence features of the 1.6 Mb regions covered by twenty physically assigned P1 clones.</title>
        <authorList>
            <person name="Sato S."/>
            <person name="Kotani H."/>
            <person name="Nakamura Y."/>
            <person name="Kaneko T."/>
            <person name="Asamizu E."/>
            <person name="Fukami M."/>
            <person name="Miyajima N."/>
            <person name="Tabata S."/>
        </authorList>
    </citation>
    <scope>NUCLEOTIDE SEQUENCE [LARGE SCALE GENOMIC DNA]</scope>
    <source>
        <strain>cv. Columbia</strain>
    </source>
</reference>
<reference key="4">
    <citation type="journal article" date="2000" name="Nature">
        <title>Sequence and analysis of chromosome 5 of the plant Arabidopsis thaliana.</title>
        <authorList>
            <person name="Tabata S."/>
            <person name="Kaneko T."/>
            <person name="Nakamura Y."/>
            <person name="Kotani H."/>
            <person name="Kato T."/>
            <person name="Asamizu E."/>
            <person name="Miyajima N."/>
            <person name="Sasamoto S."/>
            <person name="Kimura T."/>
            <person name="Hosouchi T."/>
            <person name="Kawashima K."/>
            <person name="Kohara M."/>
            <person name="Matsumoto M."/>
            <person name="Matsuno A."/>
            <person name="Muraki A."/>
            <person name="Nakayama S."/>
            <person name="Nakazaki N."/>
            <person name="Naruo K."/>
            <person name="Okumura S."/>
            <person name="Shinpo S."/>
            <person name="Takeuchi C."/>
            <person name="Wada T."/>
            <person name="Watanabe A."/>
            <person name="Yamada M."/>
            <person name="Yasuda M."/>
            <person name="Sato S."/>
            <person name="de la Bastide M."/>
            <person name="Huang E."/>
            <person name="Spiegel L."/>
            <person name="Gnoj L."/>
            <person name="O'Shaughnessy A."/>
            <person name="Preston R."/>
            <person name="Habermann K."/>
            <person name="Murray J."/>
            <person name="Johnson D."/>
            <person name="Rohlfing T."/>
            <person name="Nelson J."/>
            <person name="Stoneking T."/>
            <person name="Pepin K."/>
            <person name="Spieth J."/>
            <person name="Sekhon M."/>
            <person name="Armstrong J."/>
            <person name="Becker M."/>
            <person name="Belter E."/>
            <person name="Cordum H."/>
            <person name="Cordes M."/>
            <person name="Courtney L."/>
            <person name="Courtney W."/>
            <person name="Dante M."/>
            <person name="Du H."/>
            <person name="Edwards J."/>
            <person name="Fryman J."/>
            <person name="Haakensen B."/>
            <person name="Lamar E."/>
            <person name="Latreille P."/>
            <person name="Leonard S."/>
            <person name="Meyer R."/>
            <person name="Mulvaney E."/>
            <person name="Ozersky P."/>
            <person name="Riley A."/>
            <person name="Strowmatt C."/>
            <person name="Wagner-McPherson C."/>
            <person name="Wollam A."/>
            <person name="Yoakum M."/>
            <person name="Bell M."/>
            <person name="Dedhia N."/>
            <person name="Parnell L."/>
            <person name="Shah R."/>
            <person name="Rodriguez M."/>
            <person name="Hoon See L."/>
            <person name="Vil D."/>
            <person name="Baker J."/>
            <person name="Kirchoff K."/>
            <person name="Toth K."/>
            <person name="King L."/>
            <person name="Bahret A."/>
            <person name="Miller B."/>
            <person name="Marra M.A."/>
            <person name="Martienssen R."/>
            <person name="McCombie W.R."/>
            <person name="Wilson R.K."/>
            <person name="Murphy G."/>
            <person name="Bancroft I."/>
            <person name="Volckaert G."/>
            <person name="Wambutt R."/>
            <person name="Duesterhoeft A."/>
            <person name="Stiekema W."/>
            <person name="Pohl T."/>
            <person name="Entian K.-D."/>
            <person name="Terryn N."/>
            <person name="Hartley N."/>
            <person name="Bent E."/>
            <person name="Johnson S."/>
            <person name="Langham S.-A."/>
            <person name="McCullagh B."/>
            <person name="Robben J."/>
            <person name="Grymonprez B."/>
            <person name="Zimmermann W."/>
            <person name="Ramsperger U."/>
            <person name="Wedler H."/>
            <person name="Balke K."/>
            <person name="Wedler E."/>
            <person name="Peters S."/>
            <person name="van Staveren M."/>
            <person name="Dirkse W."/>
            <person name="Mooijman P."/>
            <person name="Klein Lankhorst R."/>
            <person name="Weitzenegger T."/>
            <person name="Bothe G."/>
            <person name="Rose M."/>
            <person name="Hauf J."/>
            <person name="Berneiser S."/>
            <person name="Hempel S."/>
            <person name="Feldpausch M."/>
            <person name="Lamberth S."/>
            <person name="Villarroel R."/>
            <person name="Gielen J."/>
            <person name="Ardiles W."/>
            <person name="Bents O."/>
            <person name="Lemcke K."/>
            <person name="Kolesov G."/>
            <person name="Mayer K.F.X."/>
            <person name="Rudd S."/>
            <person name="Schoof H."/>
            <person name="Schueller C."/>
            <person name="Zaccaria P."/>
            <person name="Mewes H.-W."/>
            <person name="Bevan M."/>
            <person name="Fransz P.F."/>
        </authorList>
    </citation>
    <scope>NUCLEOTIDE SEQUENCE [LARGE SCALE GENOMIC DNA]</scope>
    <source>
        <strain>cv. Columbia</strain>
    </source>
</reference>
<reference key="5">
    <citation type="journal article" date="2017" name="Plant J.">
        <title>Araport11: a complete reannotation of the Arabidopsis thaliana reference genome.</title>
        <authorList>
            <person name="Cheng C.Y."/>
            <person name="Krishnakumar V."/>
            <person name="Chan A.P."/>
            <person name="Thibaud-Nissen F."/>
            <person name="Schobel S."/>
            <person name="Town C.D."/>
        </authorList>
    </citation>
    <scope>GENOME REANNOTATION</scope>
    <source>
        <strain>cv. Columbia</strain>
    </source>
</reference>
<reference key="6">
    <citation type="journal article" date="2003" name="Science">
        <title>Empirical analysis of transcriptional activity in the Arabidopsis genome.</title>
        <authorList>
            <person name="Yamada K."/>
            <person name="Lim J."/>
            <person name="Dale J.M."/>
            <person name="Chen H."/>
            <person name="Shinn P."/>
            <person name="Palm C.J."/>
            <person name="Southwick A.M."/>
            <person name="Wu H.C."/>
            <person name="Kim C.J."/>
            <person name="Nguyen M."/>
            <person name="Pham P.K."/>
            <person name="Cheuk R.F."/>
            <person name="Karlin-Newmann G."/>
            <person name="Liu S.X."/>
            <person name="Lam B."/>
            <person name="Sakano H."/>
            <person name="Wu T."/>
            <person name="Yu G."/>
            <person name="Miranda M."/>
            <person name="Quach H.L."/>
            <person name="Tripp M."/>
            <person name="Chang C.H."/>
            <person name="Lee J.M."/>
            <person name="Toriumi M.J."/>
            <person name="Chan M.M."/>
            <person name="Tang C.C."/>
            <person name="Onodera C.S."/>
            <person name="Deng J.M."/>
            <person name="Akiyama K."/>
            <person name="Ansari Y."/>
            <person name="Arakawa T."/>
            <person name="Banh J."/>
            <person name="Banno F."/>
            <person name="Bowser L."/>
            <person name="Brooks S.Y."/>
            <person name="Carninci P."/>
            <person name="Chao Q."/>
            <person name="Choy N."/>
            <person name="Enju A."/>
            <person name="Goldsmith A.D."/>
            <person name="Gurjal M."/>
            <person name="Hansen N.F."/>
            <person name="Hayashizaki Y."/>
            <person name="Johnson-Hopson C."/>
            <person name="Hsuan V.W."/>
            <person name="Iida K."/>
            <person name="Karnes M."/>
            <person name="Khan S."/>
            <person name="Koesema E."/>
            <person name="Ishida J."/>
            <person name="Jiang P.X."/>
            <person name="Jones T."/>
            <person name="Kawai J."/>
            <person name="Kamiya A."/>
            <person name="Meyers C."/>
            <person name="Nakajima M."/>
            <person name="Narusaka M."/>
            <person name="Seki M."/>
            <person name="Sakurai T."/>
            <person name="Satou M."/>
            <person name="Tamse R."/>
            <person name="Vaysberg M."/>
            <person name="Wallender E.K."/>
            <person name="Wong C."/>
            <person name="Yamamura Y."/>
            <person name="Yuan S."/>
            <person name="Shinozaki K."/>
            <person name="Davis R.W."/>
            <person name="Theologis A."/>
            <person name="Ecker J.R."/>
        </authorList>
    </citation>
    <scope>NUCLEOTIDE SEQUENCE [LARGE SCALE MRNA]</scope>
    <source>
        <strain>cv. Columbia</strain>
    </source>
</reference>
<reference key="7">
    <citation type="journal article" date="2003" name="Plant J.">
        <title>Repression of gene expression by Arabidopsis HD2 histone deacetylases.</title>
        <authorList>
            <person name="Wu K."/>
            <person name="Tian L."/>
            <person name="Zhou C."/>
            <person name="Brown D."/>
            <person name="Miki B."/>
        </authorList>
    </citation>
    <scope>FUNCTION</scope>
</reference>
<reference key="8">
    <citation type="journal article" date="2004" name="Plant J.">
        <title>Expression and function of HD2-type histone deacetylases in Arabidopsis development.</title>
        <authorList>
            <person name="Zhou C."/>
            <person name="Labbe H."/>
            <person name="Sridha S."/>
            <person name="Wang L."/>
            <person name="Tian L."/>
            <person name="Latoszek-Green M."/>
            <person name="Yang Z."/>
            <person name="Brown D."/>
            <person name="Miki B."/>
            <person name="Wu K."/>
        </authorList>
    </citation>
    <scope>TISSUE SPECIFICITY</scope>
    <scope>SUBCELLULAR LOCATION</scope>
</reference>
<reference key="9">
    <citation type="journal article" date="2006" name="Plant J.">
        <title>Identification of AtHD2C as a novel regulator of abscisic acid responses in Arabidopsis.</title>
        <authorList>
            <person name="Sridha S."/>
            <person name="Wu K."/>
        </authorList>
    </citation>
    <scope>TISSUE SPECIFICITY</scope>
    <scope>FUNCTION</scope>
    <scope>INDUCTION</scope>
</reference>
<reference key="10">
    <citation type="journal article" date="2010" name="Biochem. Biophys. Res. Commun.">
        <title>Arabidopsis DNA methyltransferase AtDNMT2 associates with histone deacetylase AtHD2s activity.</title>
        <authorList>
            <person name="Song Y."/>
            <person name="Wu K."/>
            <person name="Dhaubhadel S."/>
            <person name="An L."/>
            <person name="Tian L."/>
        </authorList>
    </citation>
    <scope>INTERACTION WITH DNMT2</scope>
    <source>
        <strain>cv. Columbia</strain>
    </source>
</reference>
<reference key="11">
    <citation type="journal article" date="2012" name="Mol. Cell. Proteomics">
        <title>Comparative large-scale characterisation of plant vs. mammal proteins reveals similar and idiosyncratic N-alpha acetylation features.</title>
        <authorList>
            <person name="Bienvenut W.V."/>
            <person name="Sumpton D."/>
            <person name="Martinez A."/>
            <person name="Lilla S."/>
            <person name="Espagne C."/>
            <person name="Meinnel T."/>
            <person name="Giglione C."/>
        </authorList>
    </citation>
    <scope>ACETYLATION [LARGE SCALE ANALYSIS] AT MET-1</scope>
    <scope>IDENTIFICATION BY MASS SPECTROMETRY [LARGE SCALE ANALYSIS]</scope>
</reference>
<protein>
    <recommendedName>
        <fullName>Histone deacetylase HDT3</fullName>
    </recommendedName>
    <alternativeName>
        <fullName>HD-tuins protein 3</fullName>
    </alternativeName>
    <alternativeName>
        <fullName>Histone deacetylase 2c</fullName>
    </alternativeName>
</protein>
<sequence length="294" mass="31830">MEFWGVEVKNGKPLHLDPGLDRLVHISQVALGESKNNVTEPIQLYVTVGSDKLLIGTLSHEKFPQLSTEIVLERNFALSHTWKNGSVFFSGYKVDASDPEPEDLIDDQLEAAGFKAAPKSAAKQVNFQLPNEDVKAKQDDDADGSEEDSSDDDDSENSGDEEEEKVTAESDSEEDDSSDDEEDDSSEEETPKKPEEPKKRSAEPNSSKNPASNKKAKFVTPQKTDSKKPHVHVATPHPSKQAGKNSGGGSTGETSKQQQTPKSAGAFGCKSCTRTFTSEMGLQSHTKAKHSAAA</sequence>
<accession>Q9LZR5</accession>
<accession>Q9M4T4</accession>
<comment type="function">
    <text evidence="4 6">Probably mediates the deacetylation of lysine residues on the N-terminal part of the core histones (H2A, H2B, H3 and H4). Histone deacetylation gives a tag for epigenetic repression and plays an important role in transcriptional regulation, cell cycle progression and developmental events. Involved in the modulation of abscisic acid and stress-responsive genes.</text>
</comment>
<comment type="subunit">
    <text evidence="7">Interacts with DNMT2.</text>
</comment>
<comment type="interaction">
    <interactant intactId="EBI-3387398">
        <id>Q9LZR5</id>
    </interactant>
    <interactant intactId="EBI-4426649">
        <id>Q17TI5</id>
        <label>BRX</label>
    </interactant>
    <organismsDiffer>false</organismsDiffer>
    <experiments>3</experiments>
</comment>
<comment type="subcellular location">
    <subcellularLocation>
        <location evidence="5">Nucleus</location>
        <location evidence="5">Nucleolus</location>
    </subcellularLocation>
</comment>
<comment type="tissue specificity">
    <text evidence="5 6">Expressed in leaves, roots, stems, young plantlets, flowers and siliques. Highest levels in ovules, embryos, shoot apical meristems and first leaves. Also expressed in somatic embryos.</text>
</comment>
<comment type="induction">
    <text evidence="6">Repressed by abscisic acid.</text>
</comment>
<comment type="similarity">
    <text evidence="8">Belongs to the histone deacetylase HD2 family.</text>
</comment>
<comment type="sequence caution" evidence="8">
    <conflict type="erroneous gene model prediction">
        <sequence resource="EMBL-CDS" id="CAB82939"/>
    </conflict>
</comment>
<evidence type="ECO:0000250" key="1"/>
<evidence type="ECO:0000255" key="2">
    <source>
        <dbReference type="PROSITE-ProRule" id="PRU00042"/>
    </source>
</evidence>
<evidence type="ECO:0000256" key="3">
    <source>
        <dbReference type="SAM" id="MobiDB-lite"/>
    </source>
</evidence>
<evidence type="ECO:0000269" key="4">
    <source>
    </source>
</evidence>
<evidence type="ECO:0000269" key="5">
    <source>
    </source>
</evidence>
<evidence type="ECO:0000269" key="6">
    <source>
    </source>
</evidence>
<evidence type="ECO:0000269" key="7">
    <source>
    </source>
</evidence>
<evidence type="ECO:0000305" key="8"/>
<evidence type="ECO:0007744" key="9">
    <source>
    </source>
</evidence>
<evidence type="ECO:0007829" key="10">
    <source>
        <dbReference type="PDB" id="7VMI"/>
    </source>
</evidence>
<dbReference type="EMBL" id="AF255712">
    <property type="protein sequence ID" value="AAF70197.1"/>
    <property type="molecule type" value="mRNA"/>
</dbReference>
<dbReference type="EMBL" id="AF510168">
    <property type="protein sequence ID" value="AAM49770.1"/>
    <property type="molecule type" value="mRNA"/>
</dbReference>
<dbReference type="EMBL" id="AB005235">
    <property type="protein sequence ID" value="BAB08599.1"/>
    <property type="molecule type" value="Genomic_DNA"/>
</dbReference>
<dbReference type="EMBL" id="AL162506">
    <property type="protein sequence ID" value="CAB82939.1"/>
    <property type="status" value="ALT_SEQ"/>
    <property type="molecule type" value="Genomic_DNA"/>
</dbReference>
<dbReference type="EMBL" id="CP002688">
    <property type="protein sequence ID" value="AED90649.1"/>
    <property type="molecule type" value="Genomic_DNA"/>
</dbReference>
<dbReference type="EMBL" id="AF372889">
    <property type="protein sequence ID" value="AAK49605.1"/>
    <property type="molecule type" value="mRNA"/>
</dbReference>
<dbReference type="EMBL" id="AY142039">
    <property type="protein sequence ID" value="AAM98303.1"/>
    <property type="molecule type" value="mRNA"/>
</dbReference>
<dbReference type="PIR" id="T48401">
    <property type="entry name" value="T48401"/>
</dbReference>
<dbReference type="RefSeq" id="NP_195994.3">
    <property type="nucleotide sequence ID" value="NM_120455.4"/>
</dbReference>
<dbReference type="PDB" id="7VMI">
    <property type="method" value="X-ray"/>
    <property type="resolution" value="1.80 A"/>
    <property type="chains" value="A/B/C/D/E=1-95"/>
</dbReference>
<dbReference type="PDBsum" id="7VMI"/>
<dbReference type="SMR" id="Q9LZR5"/>
<dbReference type="BioGRID" id="17009">
    <property type="interactions" value="13"/>
</dbReference>
<dbReference type="FunCoup" id="Q9LZR5">
    <property type="interactions" value="1706"/>
</dbReference>
<dbReference type="IntAct" id="Q9LZR5">
    <property type="interactions" value="11"/>
</dbReference>
<dbReference type="STRING" id="3702.Q9LZR5"/>
<dbReference type="GlyGen" id="Q9LZR5">
    <property type="glycosylation" value="1 site"/>
</dbReference>
<dbReference type="iPTMnet" id="Q9LZR5"/>
<dbReference type="PaxDb" id="3702-AT5G03740.1"/>
<dbReference type="ProteomicsDB" id="230302"/>
<dbReference type="EnsemblPlants" id="AT5G03740.1">
    <property type="protein sequence ID" value="AT5G03740.1"/>
    <property type="gene ID" value="AT5G03740"/>
</dbReference>
<dbReference type="GeneID" id="831733"/>
<dbReference type="Gramene" id="AT5G03740.1">
    <property type="protein sequence ID" value="AT5G03740.1"/>
    <property type="gene ID" value="AT5G03740"/>
</dbReference>
<dbReference type="KEGG" id="ath:AT5G03740"/>
<dbReference type="Araport" id="AT5G03740"/>
<dbReference type="TAIR" id="AT5G03740">
    <property type="gene designation" value="HD2C"/>
</dbReference>
<dbReference type="eggNOG" id="ENOG502QVH6">
    <property type="taxonomic scope" value="Eukaryota"/>
</dbReference>
<dbReference type="HOGENOM" id="CLU_061903_0_0_1"/>
<dbReference type="InParanoid" id="Q9LZR5"/>
<dbReference type="OMA" id="GCKSCTR"/>
<dbReference type="PhylomeDB" id="Q9LZR5"/>
<dbReference type="CD-CODE" id="4299E36E">
    <property type="entry name" value="Nucleolus"/>
</dbReference>
<dbReference type="PRO" id="PR:Q9LZR5"/>
<dbReference type="Proteomes" id="UP000006548">
    <property type="component" value="Chromosome 5"/>
</dbReference>
<dbReference type="ExpressionAtlas" id="Q9LZR5">
    <property type="expression patterns" value="baseline and differential"/>
</dbReference>
<dbReference type="GO" id="GO:0005730">
    <property type="term" value="C:nucleolus"/>
    <property type="evidence" value="ECO:0000314"/>
    <property type="project" value="TAIR"/>
</dbReference>
<dbReference type="GO" id="GO:0005886">
    <property type="term" value="C:plasma membrane"/>
    <property type="evidence" value="ECO:0007005"/>
    <property type="project" value="TAIR"/>
</dbReference>
<dbReference type="GO" id="GO:0016787">
    <property type="term" value="F:hydrolase activity"/>
    <property type="evidence" value="ECO:0007669"/>
    <property type="project" value="UniProtKB-KW"/>
</dbReference>
<dbReference type="GO" id="GO:0000976">
    <property type="term" value="F:transcription cis-regulatory region binding"/>
    <property type="evidence" value="ECO:0000353"/>
    <property type="project" value="TAIR"/>
</dbReference>
<dbReference type="GO" id="GO:0008270">
    <property type="term" value="F:zinc ion binding"/>
    <property type="evidence" value="ECO:0007669"/>
    <property type="project" value="UniProtKB-KW"/>
</dbReference>
<dbReference type="GO" id="GO:0006325">
    <property type="term" value="P:chromatin organization"/>
    <property type="evidence" value="ECO:0007669"/>
    <property type="project" value="UniProtKB-KW"/>
</dbReference>
<dbReference type="GO" id="GO:0045892">
    <property type="term" value="P:negative regulation of DNA-templated transcription"/>
    <property type="evidence" value="ECO:0000314"/>
    <property type="project" value="TAIR"/>
</dbReference>
<dbReference type="GO" id="GO:0009737">
    <property type="term" value="P:response to abscisic acid"/>
    <property type="evidence" value="ECO:0000270"/>
    <property type="project" value="TAIR"/>
</dbReference>
<dbReference type="GO" id="GO:0009409">
    <property type="term" value="P:response to cold"/>
    <property type="evidence" value="ECO:0000270"/>
    <property type="project" value="TAIR"/>
</dbReference>
<dbReference type="GO" id="GO:0009651">
    <property type="term" value="P:response to salt stress"/>
    <property type="evidence" value="ECO:0000315"/>
    <property type="project" value="TAIR"/>
</dbReference>
<dbReference type="GO" id="GO:0009414">
    <property type="term" value="P:response to water deprivation"/>
    <property type="evidence" value="ECO:0000315"/>
    <property type="project" value="TAIR"/>
</dbReference>
<dbReference type="FunFam" id="2.60.120.340:FF:000004">
    <property type="entry name" value="Histone deacetylase HDT1"/>
    <property type="match status" value="1"/>
</dbReference>
<dbReference type="Gene3D" id="2.60.120.340">
    <property type="entry name" value="Nucleoplasmin core domain"/>
    <property type="match status" value="1"/>
</dbReference>
<dbReference type="InterPro" id="IPR041232">
    <property type="entry name" value="NPL"/>
</dbReference>
<dbReference type="InterPro" id="IPR013087">
    <property type="entry name" value="Znf_C2H2_type"/>
</dbReference>
<dbReference type="Pfam" id="PF17800">
    <property type="entry name" value="NPL"/>
    <property type="match status" value="1"/>
</dbReference>
<dbReference type="PROSITE" id="PS00028">
    <property type="entry name" value="ZINC_FINGER_C2H2_1"/>
    <property type="match status" value="1"/>
</dbReference>
<dbReference type="PROSITE" id="PS50157">
    <property type="entry name" value="ZINC_FINGER_C2H2_2"/>
    <property type="match status" value="1"/>
</dbReference>
<organism>
    <name type="scientific">Arabidopsis thaliana</name>
    <name type="common">Mouse-ear cress</name>
    <dbReference type="NCBI Taxonomy" id="3702"/>
    <lineage>
        <taxon>Eukaryota</taxon>
        <taxon>Viridiplantae</taxon>
        <taxon>Streptophyta</taxon>
        <taxon>Embryophyta</taxon>
        <taxon>Tracheophyta</taxon>
        <taxon>Spermatophyta</taxon>
        <taxon>Magnoliopsida</taxon>
        <taxon>eudicotyledons</taxon>
        <taxon>Gunneridae</taxon>
        <taxon>Pentapetalae</taxon>
        <taxon>rosids</taxon>
        <taxon>malvids</taxon>
        <taxon>Brassicales</taxon>
        <taxon>Brassicaceae</taxon>
        <taxon>Camelineae</taxon>
        <taxon>Arabidopsis</taxon>
    </lineage>
</organism>
<name>HDT3_ARATH</name>
<feature type="chain" id="PRO_0000195206" description="Histone deacetylase HDT3">
    <location>
        <begin position="1"/>
        <end position="294"/>
    </location>
</feature>
<feature type="zinc finger region" description="C2H2-type" evidence="2">
    <location>
        <begin position="267"/>
        <end position="290"/>
    </location>
</feature>
<feature type="region of interest" description="Required to repress transcription" evidence="1">
    <location>
        <begin position="2"/>
        <end position="5"/>
    </location>
</feature>
<feature type="region of interest" description="Disordered" evidence="3">
    <location>
        <begin position="124"/>
        <end position="269"/>
    </location>
</feature>
<feature type="compositionally biased region" description="Acidic residues" evidence="3">
    <location>
        <begin position="140"/>
        <end position="188"/>
    </location>
</feature>
<feature type="compositionally biased region" description="Basic and acidic residues" evidence="3">
    <location>
        <begin position="189"/>
        <end position="202"/>
    </location>
</feature>
<feature type="compositionally biased region" description="Low complexity" evidence="3">
    <location>
        <begin position="203"/>
        <end position="213"/>
    </location>
</feature>
<feature type="compositionally biased region" description="Polar residues" evidence="3">
    <location>
        <begin position="252"/>
        <end position="262"/>
    </location>
</feature>
<feature type="modified residue" description="N-acetylmethionine" evidence="9">
    <location>
        <position position="1"/>
    </location>
</feature>
<feature type="strand" evidence="10">
    <location>
        <begin position="2"/>
        <end position="9"/>
    </location>
</feature>
<feature type="strand" evidence="10">
    <location>
        <begin position="14"/>
        <end position="16"/>
    </location>
</feature>
<feature type="strand" evidence="10">
    <location>
        <begin position="22"/>
        <end position="31"/>
    </location>
</feature>
<feature type="strand" evidence="10">
    <location>
        <begin position="42"/>
        <end position="50"/>
    </location>
</feature>
<feature type="strand" evidence="10">
    <location>
        <begin position="52"/>
        <end position="59"/>
    </location>
</feature>
<feature type="turn" evidence="10">
    <location>
        <begin position="60"/>
        <end position="62"/>
    </location>
</feature>
<feature type="strand" evidence="10">
    <location>
        <begin position="65"/>
        <end position="72"/>
    </location>
</feature>
<feature type="strand" evidence="10">
    <location>
        <begin position="76"/>
        <end position="81"/>
    </location>
</feature>
<feature type="strand" evidence="10">
    <location>
        <begin position="85"/>
        <end position="95"/>
    </location>
</feature>
<proteinExistence type="evidence at protein level"/>